<comment type="function">
    <text evidence="1">One of two assembly initiator proteins, it binds directly to the 5'-end of the 23S rRNA, where it nucleates assembly of the 50S subunit.</text>
</comment>
<comment type="function">
    <text evidence="1">One of the proteins that surrounds the polypeptide exit tunnel on the outside of the subunit.</text>
</comment>
<comment type="subunit">
    <text evidence="1">Part of the 50S ribosomal subunit.</text>
</comment>
<comment type="similarity">
    <text evidence="1">Belongs to the universal ribosomal protein uL24 family.</text>
</comment>
<accession>Q8E7T0</accession>
<feature type="chain" id="PRO_0000130724" description="Large ribosomal subunit protein uL24">
    <location>
        <begin position="1"/>
        <end position="101"/>
    </location>
</feature>
<sequence>MFVKKGDKVRVIAGKDKGTEAVVLKALPKVNKVVVEGVALIKKHQKPNNENPQGAIVEKEAPIHVSNVQVLDKNGVAGRVGYKVVDGKKVRYNKKSGEVLD</sequence>
<name>RL24_STRA3</name>
<gene>
    <name evidence="1" type="primary">rplX</name>
    <name type="ordered locus">gbs0069</name>
</gene>
<evidence type="ECO:0000255" key="1">
    <source>
        <dbReference type="HAMAP-Rule" id="MF_01326"/>
    </source>
</evidence>
<evidence type="ECO:0000305" key="2"/>
<proteinExistence type="inferred from homology"/>
<keyword id="KW-0687">Ribonucleoprotein</keyword>
<keyword id="KW-0689">Ribosomal protein</keyword>
<keyword id="KW-0694">RNA-binding</keyword>
<keyword id="KW-0699">rRNA-binding</keyword>
<reference key="1">
    <citation type="journal article" date="2002" name="Mol. Microbiol.">
        <title>Genome sequence of Streptococcus agalactiae, a pathogen causing invasive neonatal disease.</title>
        <authorList>
            <person name="Glaser P."/>
            <person name="Rusniok C."/>
            <person name="Buchrieser C."/>
            <person name="Chevalier F."/>
            <person name="Frangeul L."/>
            <person name="Msadek T."/>
            <person name="Zouine M."/>
            <person name="Couve E."/>
            <person name="Lalioui L."/>
            <person name="Poyart C."/>
            <person name="Trieu-Cuot P."/>
            <person name="Kunst F."/>
        </authorList>
    </citation>
    <scope>NUCLEOTIDE SEQUENCE [LARGE SCALE GENOMIC DNA]</scope>
    <source>
        <strain>NEM316</strain>
    </source>
</reference>
<dbReference type="EMBL" id="AL766843">
    <property type="protein sequence ID" value="CAD45714.1"/>
    <property type="molecule type" value="Genomic_DNA"/>
</dbReference>
<dbReference type="RefSeq" id="WP_000497687.1">
    <property type="nucleotide sequence ID" value="NC_004368.1"/>
</dbReference>
<dbReference type="SMR" id="Q8E7T0"/>
<dbReference type="GeneID" id="66885029"/>
<dbReference type="KEGG" id="san:rplX"/>
<dbReference type="eggNOG" id="COG0198">
    <property type="taxonomic scope" value="Bacteria"/>
</dbReference>
<dbReference type="HOGENOM" id="CLU_093315_2_0_9"/>
<dbReference type="Proteomes" id="UP000000823">
    <property type="component" value="Chromosome"/>
</dbReference>
<dbReference type="GO" id="GO:1990904">
    <property type="term" value="C:ribonucleoprotein complex"/>
    <property type="evidence" value="ECO:0007669"/>
    <property type="project" value="UniProtKB-KW"/>
</dbReference>
<dbReference type="GO" id="GO:0005840">
    <property type="term" value="C:ribosome"/>
    <property type="evidence" value="ECO:0007669"/>
    <property type="project" value="UniProtKB-KW"/>
</dbReference>
<dbReference type="GO" id="GO:0019843">
    <property type="term" value="F:rRNA binding"/>
    <property type="evidence" value="ECO:0007669"/>
    <property type="project" value="UniProtKB-UniRule"/>
</dbReference>
<dbReference type="GO" id="GO:0003735">
    <property type="term" value="F:structural constituent of ribosome"/>
    <property type="evidence" value="ECO:0007669"/>
    <property type="project" value="InterPro"/>
</dbReference>
<dbReference type="GO" id="GO:0006412">
    <property type="term" value="P:translation"/>
    <property type="evidence" value="ECO:0007669"/>
    <property type="project" value="UniProtKB-UniRule"/>
</dbReference>
<dbReference type="CDD" id="cd06089">
    <property type="entry name" value="KOW_RPL26"/>
    <property type="match status" value="1"/>
</dbReference>
<dbReference type="FunFam" id="2.30.30.30:FF:000004">
    <property type="entry name" value="50S ribosomal protein L24"/>
    <property type="match status" value="1"/>
</dbReference>
<dbReference type="Gene3D" id="2.30.30.30">
    <property type="match status" value="1"/>
</dbReference>
<dbReference type="HAMAP" id="MF_01326_B">
    <property type="entry name" value="Ribosomal_uL24_B"/>
    <property type="match status" value="1"/>
</dbReference>
<dbReference type="InterPro" id="IPR005824">
    <property type="entry name" value="KOW"/>
</dbReference>
<dbReference type="InterPro" id="IPR014722">
    <property type="entry name" value="Rib_uL2_dom2"/>
</dbReference>
<dbReference type="InterPro" id="IPR003256">
    <property type="entry name" value="Ribosomal_uL24"/>
</dbReference>
<dbReference type="InterPro" id="IPR005825">
    <property type="entry name" value="Ribosomal_uL24_CS"/>
</dbReference>
<dbReference type="InterPro" id="IPR041988">
    <property type="entry name" value="Ribosomal_uL24_KOW"/>
</dbReference>
<dbReference type="InterPro" id="IPR008991">
    <property type="entry name" value="Translation_prot_SH3-like_sf"/>
</dbReference>
<dbReference type="NCBIfam" id="TIGR01079">
    <property type="entry name" value="rplX_bact"/>
    <property type="match status" value="1"/>
</dbReference>
<dbReference type="PANTHER" id="PTHR12903">
    <property type="entry name" value="MITOCHONDRIAL RIBOSOMAL PROTEIN L24"/>
    <property type="match status" value="1"/>
</dbReference>
<dbReference type="Pfam" id="PF00467">
    <property type="entry name" value="KOW"/>
    <property type="match status" value="1"/>
</dbReference>
<dbReference type="Pfam" id="PF17136">
    <property type="entry name" value="ribosomal_L24"/>
    <property type="match status" value="1"/>
</dbReference>
<dbReference type="SMART" id="SM00739">
    <property type="entry name" value="KOW"/>
    <property type="match status" value="1"/>
</dbReference>
<dbReference type="SUPFAM" id="SSF50104">
    <property type="entry name" value="Translation proteins SH3-like domain"/>
    <property type="match status" value="1"/>
</dbReference>
<dbReference type="PROSITE" id="PS01108">
    <property type="entry name" value="RIBOSOMAL_L24"/>
    <property type="match status" value="1"/>
</dbReference>
<protein>
    <recommendedName>
        <fullName evidence="1">Large ribosomal subunit protein uL24</fullName>
    </recommendedName>
    <alternativeName>
        <fullName evidence="2">50S ribosomal protein L24</fullName>
    </alternativeName>
</protein>
<organism>
    <name type="scientific">Streptococcus agalactiae serotype III (strain NEM316)</name>
    <dbReference type="NCBI Taxonomy" id="211110"/>
    <lineage>
        <taxon>Bacteria</taxon>
        <taxon>Bacillati</taxon>
        <taxon>Bacillota</taxon>
        <taxon>Bacilli</taxon>
        <taxon>Lactobacillales</taxon>
        <taxon>Streptococcaceae</taxon>
        <taxon>Streptococcus</taxon>
    </lineage>
</organism>